<comment type="subcellular location">
    <subcellularLocation>
        <location evidence="3">Mitochondrion</location>
    </subcellularLocation>
</comment>
<comment type="induction">
    <text evidence="2 4">Induced by abscisic acid (ABA). Accumulates in roots and, to a lower extent, in leaves during progressive drought in an ABA-dependent manner (PubMed:7823904). Triggered by cold acclimation (PubMed:15165189).</text>
</comment>
<comment type="similarity">
    <text evidence="7">Belongs to the LEA type 3 family.</text>
</comment>
<comment type="sequence caution" evidence="7">
    <conflict type="erroneous initiation">
        <sequence resource="EMBL-CDS" id="BAF00107"/>
    </conflict>
    <text>Truncated N-terminus.</text>
</comment>
<comment type="sequence caution" evidence="7">
    <conflict type="erroneous gene model prediction">
        <sequence resource="EMBL-CDS" id="CAB10370"/>
    </conflict>
</comment>
<comment type="sequence caution" evidence="7">
    <conflict type="erroneous gene model prediction">
        <sequence resource="EMBL-CDS" id="CAB78633"/>
    </conflict>
</comment>
<feature type="transit peptide" description="Mitochondrion" evidence="1">
    <location>
        <begin position="1"/>
        <end position="31"/>
    </location>
</feature>
<feature type="chain" id="PRO_0000439765" description="Late embryogenis abundant protein 41" evidence="1">
    <location>
        <begin position="32"/>
        <end position="104"/>
    </location>
</feature>
<dbReference type="EMBL" id="X78585">
    <property type="protein sequence ID" value="CAA55322.1"/>
    <property type="molecule type" value="mRNA"/>
</dbReference>
<dbReference type="EMBL" id="Z97339">
    <property type="protein sequence ID" value="CAB10370.1"/>
    <property type="status" value="ALT_SEQ"/>
    <property type="molecule type" value="Genomic_DNA"/>
</dbReference>
<dbReference type="EMBL" id="AL161542">
    <property type="protein sequence ID" value="CAB78633.1"/>
    <property type="status" value="ALT_SEQ"/>
    <property type="molecule type" value="Genomic_DNA"/>
</dbReference>
<dbReference type="EMBL" id="CP002687">
    <property type="protein sequence ID" value="AEE83665.1"/>
    <property type="molecule type" value="Genomic_DNA"/>
</dbReference>
<dbReference type="EMBL" id="BT003165">
    <property type="protein sequence ID" value="AAO24597.1"/>
    <property type="molecule type" value="mRNA"/>
</dbReference>
<dbReference type="EMBL" id="AK228151">
    <property type="protein sequence ID" value="BAF00107.1"/>
    <property type="status" value="ALT_INIT"/>
    <property type="molecule type" value="mRNA"/>
</dbReference>
<dbReference type="PIR" id="H71424">
    <property type="entry name" value="H71424"/>
</dbReference>
<dbReference type="PIR" id="S51479">
    <property type="entry name" value="S51479"/>
</dbReference>
<dbReference type="RefSeq" id="NP_193326.4">
    <property type="nucleotide sequence ID" value="NM_117683.5"/>
</dbReference>
<dbReference type="FunCoup" id="Q39084">
    <property type="interactions" value="3"/>
</dbReference>
<dbReference type="STRING" id="3702.Q39084"/>
<dbReference type="PaxDb" id="3702-AT4G15910.1"/>
<dbReference type="ProteomicsDB" id="230282"/>
<dbReference type="EnsemblPlants" id="AT4G15910.1">
    <property type="protein sequence ID" value="AT4G15910.1"/>
    <property type="gene ID" value="AT4G15910"/>
</dbReference>
<dbReference type="GeneID" id="827273"/>
<dbReference type="Gramene" id="AT4G15910.1">
    <property type="protein sequence ID" value="AT4G15910.1"/>
    <property type="gene ID" value="AT4G15910"/>
</dbReference>
<dbReference type="KEGG" id="ath:AT4G15910"/>
<dbReference type="Araport" id="AT4G15910"/>
<dbReference type="TAIR" id="AT4G15910">
    <property type="gene designation" value="DI21"/>
</dbReference>
<dbReference type="eggNOG" id="ENOG502R7KS">
    <property type="taxonomic scope" value="Eukaryota"/>
</dbReference>
<dbReference type="HOGENOM" id="CLU_158380_1_1_1"/>
<dbReference type="InParanoid" id="Q39084"/>
<dbReference type="OMA" id="RVMVGKM"/>
<dbReference type="OrthoDB" id="1693956at2759"/>
<dbReference type="PhylomeDB" id="Q39084"/>
<dbReference type="PRO" id="PR:Q39084"/>
<dbReference type="Proteomes" id="UP000006548">
    <property type="component" value="Chromosome 4"/>
</dbReference>
<dbReference type="ExpressionAtlas" id="Q39084">
    <property type="expression patterns" value="baseline and differential"/>
</dbReference>
<dbReference type="GO" id="GO:0005739">
    <property type="term" value="C:mitochondrion"/>
    <property type="evidence" value="ECO:0007005"/>
    <property type="project" value="TAIR"/>
</dbReference>
<dbReference type="GO" id="GO:0009631">
    <property type="term" value="P:cold acclimation"/>
    <property type="evidence" value="ECO:0000270"/>
    <property type="project" value="UniProtKB"/>
</dbReference>
<dbReference type="GO" id="GO:0009737">
    <property type="term" value="P:response to abscisic acid"/>
    <property type="evidence" value="ECO:0000314"/>
    <property type="project" value="UniProtKB"/>
</dbReference>
<dbReference type="GO" id="GO:0009409">
    <property type="term" value="P:response to cold"/>
    <property type="evidence" value="ECO:0000270"/>
    <property type="project" value="UniProtKB"/>
</dbReference>
<dbReference type="GO" id="GO:0009414">
    <property type="term" value="P:response to water deprivation"/>
    <property type="evidence" value="ECO:0000270"/>
    <property type="project" value="TAIR"/>
</dbReference>
<dbReference type="InterPro" id="IPR004926">
    <property type="entry name" value="LEA_3a"/>
</dbReference>
<dbReference type="PANTHER" id="PTHR33509">
    <property type="entry name" value="LATE EMBRYOGENIS ABUNDANT PROTEIN 2-RELATED"/>
    <property type="match status" value="1"/>
</dbReference>
<dbReference type="PANTHER" id="PTHR33509:SF34">
    <property type="entry name" value="LATE EMBRYOGENIS ABUNDANT PROTEIN 41"/>
    <property type="match status" value="1"/>
</dbReference>
<dbReference type="Pfam" id="PF03242">
    <property type="entry name" value="LEA_3a"/>
    <property type="match status" value="1"/>
</dbReference>
<accession>Q39084</accession>
<accession>O23440</accession>
<accession>Q0WRZ2</accession>
<evidence type="ECO:0000255" key="1"/>
<evidence type="ECO:0000269" key="2">
    <source>
    </source>
</evidence>
<evidence type="ECO:0000269" key="3">
    <source>
    </source>
</evidence>
<evidence type="ECO:0000269" key="4">
    <source>
    </source>
</evidence>
<evidence type="ECO:0000303" key="5">
    <source>
    </source>
</evidence>
<evidence type="ECO:0000303" key="6">
    <source>
    </source>
</evidence>
<evidence type="ECO:0000305" key="7"/>
<evidence type="ECO:0000312" key="8">
    <source>
        <dbReference type="Araport" id="AT4G15910"/>
    </source>
</evidence>
<evidence type="ECO:0000312" key="9">
    <source>
        <dbReference type="EMBL" id="CAB10370.1"/>
    </source>
</evidence>
<evidence type="ECO:0000312" key="10">
    <source>
        <dbReference type="EMBL" id="CAB78633.1"/>
    </source>
</evidence>
<reference key="1">
    <citation type="journal article" date="1995" name="Mol. Gen. Genet.">
        <title>Abscisic acid-dependent and -independent regulation of gene expression by progressive drought in Arabidopsis thaliana.</title>
        <authorList>
            <person name="Gosti F."/>
            <person name="Bertauche N."/>
            <person name="Vartanian N."/>
            <person name="Giraudat J."/>
        </authorList>
    </citation>
    <scope>NUCLEOTIDE SEQUENCE [MRNA]</scope>
    <scope>INDUCTION BY DROUGHT AND ABSCISIC ACID</scope>
    <source>
        <strain>cv. Columbia</strain>
        <tissue>Root</tissue>
    </source>
</reference>
<reference key="2">
    <citation type="journal article" date="1998" name="Nature">
        <title>Analysis of 1.9 Mb of contiguous sequence from chromosome 4 of Arabidopsis thaliana.</title>
        <authorList>
            <person name="Bevan M."/>
            <person name="Bancroft I."/>
            <person name="Bent E."/>
            <person name="Love K."/>
            <person name="Goodman H.M."/>
            <person name="Dean C."/>
            <person name="Bergkamp R."/>
            <person name="Dirkse W."/>
            <person name="van Staveren M."/>
            <person name="Stiekema W."/>
            <person name="Drost L."/>
            <person name="Ridley P."/>
            <person name="Hudson S.-A."/>
            <person name="Patel K."/>
            <person name="Murphy G."/>
            <person name="Piffanelli P."/>
            <person name="Wedler H."/>
            <person name="Wedler E."/>
            <person name="Wambutt R."/>
            <person name="Weitzenegger T."/>
            <person name="Pohl T."/>
            <person name="Terryn N."/>
            <person name="Gielen J."/>
            <person name="Villarroel R."/>
            <person name="De Clercq R."/>
            <person name="van Montagu M."/>
            <person name="Lecharny A."/>
            <person name="Aubourg S."/>
            <person name="Gy I."/>
            <person name="Kreis M."/>
            <person name="Lao N."/>
            <person name="Kavanagh T."/>
            <person name="Hempel S."/>
            <person name="Kotter P."/>
            <person name="Entian K.-D."/>
            <person name="Rieger M."/>
            <person name="Schaefer M."/>
            <person name="Funk B."/>
            <person name="Mueller-Auer S."/>
            <person name="Silvey M."/>
            <person name="James R."/>
            <person name="Monfort A."/>
            <person name="Pons A."/>
            <person name="Puigdomenech P."/>
            <person name="Douka A."/>
            <person name="Voukelatou E."/>
            <person name="Milioni D."/>
            <person name="Hatzopoulos P."/>
            <person name="Piravandi E."/>
            <person name="Obermaier B."/>
            <person name="Hilbert H."/>
            <person name="Duesterhoeft A."/>
            <person name="Moores T."/>
            <person name="Jones J.D.G."/>
            <person name="Eneva T."/>
            <person name="Palme K."/>
            <person name="Benes V."/>
            <person name="Rechmann S."/>
            <person name="Ansorge W."/>
            <person name="Cooke R."/>
            <person name="Berger C."/>
            <person name="Delseny M."/>
            <person name="Voet M."/>
            <person name="Volckaert G."/>
            <person name="Mewes H.-W."/>
            <person name="Klosterman S."/>
            <person name="Schueller C."/>
            <person name="Chalwatzis N."/>
        </authorList>
    </citation>
    <scope>NUCLEOTIDE SEQUENCE [LARGE SCALE GENOMIC DNA]</scope>
    <source>
        <strain>cv. Columbia</strain>
    </source>
</reference>
<reference key="3">
    <citation type="journal article" date="1999" name="Nature">
        <title>Sequence and analysis of chromosome 4 of the plant Arabidopsis thaliana.</title>
        <authorList>
            <person name="Mayer K.F.X."/>
            <person name="Schueller C."/>
            <person name="Wambutt R."/>
            <person name="Murphy G."/>
            <person name="Volckaert G."/>
            <person name="Pohl T."/>
            <person name="Duesterhoeft A."/>
            <person name="Stiekema W."/>
            <person name="Entian K.-D."/>
            <person name="Terryn N."/>
            <person name="Harris B."/>
            <person name="Ansorge W."/>
            <person name="Brandt P."/>
            <person name="Grivell L.A."/>
            <person name="Rieger M."/>
            <person name="Weichselgartner M."/>
            <person name="de Simone V."/>
            <person name="Obermaier B."/>
            <person name="Mache R."/>
            <person name="Mueller M."/>
            <person name="Kreis M."/>
            <person name="Delseny M."/>
            <person name="Puigdomenech P."/>
            <person name="Watson M."/>
            <person name="Schmidtheini T."/>
            <person name="Reichert B."/>
            <person name="Portetelle D."/>
            <person name="Perez-Alonso M."/>
            <person name="Boutry M."/>
            <person name="Bancroft I."/>
            <person name="Vos P."/>
            <person name="Hoheisel J."/>
            <person name="Zimmermann W."/>
            <person name="Wedler H."/>
            <person name="Ridley P."/>
            <person name="Langham S.-A."/>
            <person name="McCullagh B."/>
            <person name="Bilham L."/>
            <person name="Robben J."/>
            <person name="van der Schueren J."/>
            <person name="Grymonprez B."/>
            <person name="Chuang Y.-J."/>
            <person name="Vandenbussche F."/>
            <person name="Braeken M."/>
            <person name="Weltjens I."/>
            <person name="Voet M."/>
            <person name="Bastiaens I."/>
            <person name="Aert R."/>
            <person name="Defoor E."/>
            <person name="Weitzenegger T."/>
            <person name="Bothe G."/>
            <person name="Ramsperger U."/>
            <person name="Hilbert H."/>
            <person name="Braun M."/>
            <person name="Holzer E."/>
            <person name="Brandt A."/>
            <person name="Peters S."/>
            <person name="van Staveren M."/>
            <person name="Dirkse W."/>
            <person name="Mooijman P."/>
            <person name="Klein Lankhorst R."/>
            <person name="Rose M."/>
            <person name="Hauf J."/>
            <person name="Koetter P."/>
            <person name="Berneiser S."/>
            <person name="Hempel S."/>
            <person name="Feldpausch M."/>
            <person name="Lamberth S."/>
            <person name="Van den Daele H."/>
            <person name="De Keyser A."/>
            <person name="Buysshaert C."/>
            <person name="Gielen J."/>
            <person name="Villarroel R."/>
            <person name="De Clercq R."/>
            <person name="van Montagu M."/>
            <person name="Rogers J."/>
            <person name="Cronin A."/>
            <person name="Quail M.A."/>
            <person name="Bray-Allen S."/>
            <person name="Clark L."/>
            <person name="Doggett J."/>
            <person name="Hall S."/>
            <person name="Kay M."/>
            <person name="Lennard N."/>
            <person name="McLay K."/>
            <person name="Mayes R."/>
            <person name="Pettett A."/>
            <person name="Rajandream M.A."/>
            <person name="Lyne M."/>
            <person name="Benes V."/>
            <person name="Rechmann S."/>
            <person name="Borkova D."/>
            <person name="Bloecker H."/>
            <person name="Scharfe M."/>
            <person name="Grimm M."/>
            <person name="Loehnert T.-H."/>
            <person name="Dose S."/>
            <person name="de Haan M."/>
            <person name="Maarse A.C."/>
            <person name="Schaefer M."/>
            <person name="Mueller-Auer S."/>
            <person name="Gabel C."/>
            <person name="Fuchs M."/>
            <person name="Fartmann B."/>
            <person name="Granderath K."/>
            <person name="Dauner D."/>
            <person name="Herzl A."/>
            <person name="Neumann S."/>
            <person name="Argiriou A."/>
            <person name="Vitale D."/>
            <person name="Liguori R."/>
            <person name="Piravandi E."/>
            <person name="Massenet O."/>
            <person name="Quigley F."/>
            <person name="Clabauld G."/>
            <person name="Muendlein A."/>
            <person name="Felber R."/>
            <person name="Schnabl S."/>
            <person name="Hiller R."/>
            <person name="Schmidt W."/>
            <person name="Lecharny A."/>
            <person name="Aubourg S."/>
            <person name="Chefdor F."/>
            <person name="Cooke R."/>
            <person name="Berger C."/>
            <person name="Monfort A."/>
            <person name="Casacuberta E."/>
            <person name="Gibbons T."/>
            <person name="Weber N."/>
            <person name="Vandenbol M."/>
            <person name="Bargues M."/>
            <person name="Terol J."/>
            <person name="Torres A."/>
            <person name="Perez-Perez A."/>
            <person name="Purnelle B."/>
            <person name="Bent E."/>
            <person name="Johnson S."/>
            <person name="Tacon D."/>
            <person name="Jesse T."/>
            <person name="Heijnen L."/>
            <person name="Schwarz S."/>
            <person name="Scholler P."/>
            <person name="Heber S."/>
            <person name="Francs P."/>
            <person name="Bielke C."/>
            <person name="Frishman D."/>
            <person name="Haase D."/>
            <person name="Lemcke K."/>
            <person name="Mewes H.-W."/>
            <person name="Stocker S."/>
            <person name="Zaccaria P."/>
            <person name="Bevan M."/>
            <person name="Wilson R.K."/>
            <person name="de la Bastide M."/>
            <person name="Habermann K."/>
            <person name="Parnell L."/>
            <person name="Dedhia N."/>
            <person name="Gnoj L."/>
            <person name="Schutz K."/>
            <person name="Huang E."/>
            <person name="Spiegel L."/>
            <person name="Sekhon M."/>
            <person name="Murray J."/>
            <person name="Sheet P."/>
            <person name="Cordes M."/>
            <person name="Abu-Threideh J."/>
            <person name="Stoneking T."/>
            <person name="Kalicki J."/>
            <person name="Graves T."/>
            <person name="Harmon G."/>
            <person name="Edwards J."/>
            <person name="Latreille P."/>
            <person name="Courtney L."/>
            <person name="Cloud J."/>
            <person name="Abbott A."/>
            <person name="Scott K."/>
            <person name="Johnson D."/>
            <person name="Minx P."/>
            <person name="Bentley D."/>
            <person name="Fulton B."/>
            <person name="Miller N."/>
            <person name="Greco T."/>
            <person name="Kemp K."/>
            <person name="Kramer J."/>
            <person name="Fulton L."/>
            <person name="Mardis E."/>
            <person name="Dante M."/>
            <person name="Pepin K."/>
            <person name="Hillier L.W."/>
            <person name="Nelson J."/>
            <person name="Spieth J."/>
            <person name="Ryan E."/>
            <person name="Andrews S."/>
            <person name="Geisel C."/>
            <person name="Layman D."/>
            <person name="Du H."/>
            <person name="Ali J."/>
            <person name="Berghoff A."/>
            <person name="Jones K."/>
            <person name="Drone K."/>
            <person name="Cotton M."/>
            <person name="Joshu C."/>
            <person name="Antonoiu B."/>
            <person name="Zidanic M."/>
            <person name="Strong C."/>
            <person name="Sun H."/>
            <person name="Lamar B."/>
            <person name="Yordan C."/>
            <person name="Ma P."/>
            <person name="Zhong J."/>
            <person name="Preston R."/>
            <person name="Vil D."/>
            <person name="Shekher M."/>
            <person name="Matero A."/>
            <person name="Shah R."/>
            <person name="Swaby I.K."/>
            <person name="O'Shaughnessy A."/>
            <person name="Rodriguez M."/>
            <person name="Hoffman J."/>
            <person name="Till S."/>
            <person name="Granat S."/>
            <person name="Shohdy N."/>
            <person name="Hasegawa A."/>
            <person name="Hameed A."/>
            <person name="Lodhi M."/>
            <person name="Johnson A."/>
            <person name="Chen E."/>
            <person name="Marra M.A."/>
            <person name="Martienssen R."/>
            <person name="McCombie W.R."/>
        </authorList>
    </citation>
    <scope>NUCLEOTIDE SEQUENCE [LARGE SCALE GENOMIC DNA]</scope>
    <source>
        <strain>cv. Columbia</strain>
    </source>
</reference>
<reference key="4">
    <citation type="journal article" date="2017" name="Plant J.">
        <title>Araport11: a complete reannotation of the Arabidopsis thaliana reference genome.</title>
        <authorList>
            <person name="Cheng C.Y."/>
            <person name="Krishnakumar V."/>
            <person name="Chan A.P."/>
            <person name="Thibaud-Nissen F."/>
            <person name="Schobel S."/>
            <person name="Town C.D."/>
        </authorList>
    </citation>
    <scope>GENOME REANNOTATION</scope>
    <source>
        <strain>cv. Columbia</strain>
    </source>
</reference>
<reference key="5">
    <citation type="journal article" date="2003" name="Science">
        <title>Empirical analysis of transcriptional activity in the Arabidopsis genome.</title>
        <authorList>
            <person name="Yamada K."/>
            <person name="Lim J."/>
            <person name="Dale J.M."/>
            <person name="Chen H."/>
            <person name="Shinn P."/>
            <person name="Palm C.J."/>
            <person name="Southwick A.M."/>
            <person name="Wu H.C."/>
            <person name="Kim C.J."/>
            <person name="Nguyen M."/>
            <person name="Pham P.K."/>
            <person name="Cheuk R.F."/>
            <person name="Karlin-Newmann G."/>
            <person name="Liu S.X."/>
            <person name="Lam B."/>
            <person name="Sakano H."/>
            <person name="Wu T."/>
            <person name="Yu G."/>
            <person name="Miranda M."/>
            <person name="Quach H.L."/>
            <person name="Tripp M."/>
            <person name="Chang C.H."/>
            <person name="Lee J.M."/>
            <person name="Toriumi M.J."/>
            <person name="Chan M.M."/>
            <person name="Tang C.C."/>
            <person name="Onodera C.S."/>
            <person name="Deng J.M."/>
            <person name="Akiyama K."/>
            <person name="Ansari Y."/>
            <person name="Arakawa T."/>
            <person name="Banh J."/>
            <person name="Banno F."/>
            <person name="Bowser L."/>
            <person name="Brooks S.Y."/>
            <person name="Carninci P."/>
            <person name="Chao Q."/>
            <person name="Choy N."/>
            <person name="Enju A."/>
            <person name="Goldsmith A.D."/>
            <person name="Gurjal M."/>
            <person name="Hansen N.F."/>
            <person name="Hayashizaki Y."/>
            <person name="Johnson-Hopson C."/>
            <person name="Hsuan V.W."/>
            <person name="Iida K."/>
            <person name="Karnes M."/>
            <person name="Khan S."/>
            <person name="Koesema E."/>
            <person name="Ishida J."/>
            <person name="Jiang P.X."/>
            <person name="Jones T."/>
            <person name="Kawai J."/>
            <person name="Kamiya A."/>
            <person name="Meyers C."/>
            <person name="Nakajima M."/>
            <person name="Narusaka M."/>
            <person name="Seki M."/>
            <person name="Sakurai T."/>
            <person name="Satou M."/>
            <person name="Tamse R."/>
            <person name="Vaysberg M."/>
            <person name="Wallender E.K."/>
            <person name="Wong C."/>
            <person name="Yamamura Y."/>
            <person name="Yuan S."/>
            <person name="Shinozaki K."/>
            <person name="Davis R.W."/>
            <person name="Theologis A."/>
            <person name="Ecker J.R."/>
        </authorList>
    </citation>
    <scope>NUCLEOTIDE SEQUENCE [LARGE SCALE MRNA]</scope>
    <source>
        <strain>cv. Columbia</strain>
    </source>
</reference>
<reference key="6">
    <citation type="submission" date="2006-07" db="EMBL/GenBank/DDBJ databases">
        <title>Large-scale analysis of RIKEN Arabidopsis full-length (RAFL) cDNAs.</title>
        <authorList>
            <person name="Totoki Y."/>
            <person name="Seki M."/>
            <person name="Ishida J."/>
            <person name="Nakajima M."/>
            <person name="Enju A."/>
            <person name="Kamiya A."/>
            <person name="Narusaka M."/>
            <person name="Shin-i T."/>
            <person name="Nakagawa M."/>
            <person name="Sakamoto N."/>
            <person name="Oishi K."/>
            <person name="Kohara Y."/>
            <person name="Kobayashi M."/>
            <person name="Toyoda A."/>
            <person name="Sakaki Y."/>
            <person name="Sakurai T."/>
            <person name="Iida K."/>
            <person name="Akiyama K."/>
            <person name="Satou M."/>
            <person name="Toyoda T."/>
            <person name="Konagaya A."/>
            <person name="Carninci P."/>
            <person name="Kawai J."/>
            <person name="Hayashizaki Y."/>
            <person name="Shinozaki K."/>
        </authorList>
    </citation>
    <scope>NUCLEOTIDE SEQUENCE [LARGE SCALE MRNA]</scope>
    <source>
        <strain>cv. Columbia</strain>
    </source>
</reference>
<reference key="7">
    <citation type="journal article" date="2004" name="Plant J.">
        <title>Identification of cold-inducible downstream genes of the Arabidopsis DREB1A/CBF3 transcriptional factor using two microarray systems.</title>
        <authorList>
            <person name="Maruyama K."/>
            <person name="Sakuma Y."/>
            <person name="Kasuga M."/>
            <person name="Ito Y."/>
            <person name="Seki M."/>
            <person name="Goda H."/>
            <person name="Shimada Y."/>
            <person name="Yoshida S."/>
            <person name="Shinozaki K."/>
            <person name="Yamaguchi-Shinozaki K."/>
        </authorList>
    </citation>
    <scope>INDUCTION BY COLD</scope>
</reference>
<reference key="8">
    <citation type="journal article" date="2006" name="Funct. Integr. Genomics">
        <title>Monitoring expression profiles of Arabidopsis genes during cold acclimation and deacclimation using DNA microarrays.</title>
        <authorList>
            <person name="Oono Y."/>
            <person name="Seki M."/>
            <person name="Satou M."/>
            <person name="Iida K."/>
            <person name="Akiyama K."/>
            <person name="Sakurai T."/>
            <person name="Fujita M."/>
            <person name="Yamaguchi-Shinozaki K."/>
            <person name="Shinozaki K."/>
        </authorList>
    </citation>
    <scope>INDUCTION BY COLD</scope>
</reference>
<reference key="9">
    <citation type="journal article" date="2008" name="BMC Genomics">
        <title>LEA (late embryogenesis abundant) proteins and their encoding genes in Arabidopsis thaliana.</title>
        <authorList>
            <person name="Hundertmark M."/>
            <person name="Hincha D.K."/>
        </authorList>
    </citation>
    <scope>GENE FAMILY</scope>
</reference>
<reference key="10">
    <citation type="journal article" date="2014" name="Plant Cell">
        <title>The ubiquitous distribution of late embryogenesis abundant proteins across cell compartments in Arabidopsis offers tailored protection against abiotic stress.</title>
        <authorList>
            <person name="Candat A."/>
            <person name="Paszkiewicz G."/>
            <person name="Neveu M."/>
            <person name="Gautier R."/>
            <person name="Logan D.C."/>
            <person name="Avelange-Macherel M.-H."/>
            <person name="Macherel D."/>
        </authorList>
    </citation>
    <scope>SUBCELLULAR LOCATION</scope>
    <scope>GENE FAMILY</scope>
    <scope>NOMENCLATURE</scope>
</reference>
<organism>
    <name type="scientific">Arabidopsis thaliana</name>
    <name type="common">Mouse-ear cress</name>
    <dbReference type="NCBI Taxonomy" id="3702"/>
    <lineage>
        <taxon>Eukaryota</taxon>
        <taxon>Viridiplantae</taxon>
        <taxon>Streptophyta</taxon>
        <taxon>Embryophyta</taxon>
        <taxon>Tracheophyta</taxon>
        <taxon>Spermatophyta</taxon>
        <taxon>Magnoliopsida</taxon>
        <taxon>eudicotyledons</taxon>
        <taxon>Gunneridae</taxon>
        <taxon>Pentapetalae</taxon>
        <taxon>rosids</taxon>
        <taxon>malvids</taxon>
        <taxon>Brassicales</taxon>
        <taxon>Brassicaceae</taxon>
        <taxon>Camelineae</taxon>
        <taxon>Arabidopsis</taxon>
    </lineage>
</organism>
<proteinExistence type="evidence at transcript level"/>
<protein>
    <recommendedName>
        <fullName evidence="5">Late embryogenis abundant protein 41</fullName>
    </recommendedName>
    <alternativeName>
        <fullName evidence="6">Protein DROUGHT-INDUCED 21</fullName>
        <shortName evidence="6">AtDI21</shortName>
    </alternativeName>
</protein>
<sequence>MAARSLSGAVKSLCSAASGSLSCSIVLRRSYVATSQNVTAAGLSKGGSTRVMVGKMEQRGLDQEAESAWGPDPVTGYYRPSNRAAEIDPAELRELLLKNKAKSF</sequence>
<name>LEA41_ARATH</name>
<gene>
    <name evidence="5" type="primary">LEA41</name>
    <name evidence="6" type="synonym">DI21</name>
    <name evidence="8" type="ordered locus">At4g15910</name>
    <name evidence="9" type="ORF">dl3995w</name>
    <name evidence="10" type="ORF">FCAALL.235</name>
</gene>
<keyword id="KW-0496">Mitochondrion</keyword>
<keyword id="KW-1185">Reference proteome</keyword>
<keyword id="KW-0809">Transit peptide</keyword>